<gene>
    <name type="primary">omtA</name>
    <name type="synonym">AflP</name>
    <name type="synonym">omt-1</name>
    <name type="ORF">AFLA_139210</name>
</gene>
<comment type="function">
    <text>Involved in the conversion of sterigmatocystin to O-methylsterigmatocystin (OMST) and dihydrosterigmatocystin to dihydro-o-methylsterigmatocystin in the aflatoxin biosynthesis pathway.</text>
</comment>
<comment type="catalytic activity">
    <reaction>
        <text>sterigmatocystin + S-adenosyl-L-methionine = 8-O-methylsterigmatocystin + S-adenosyl-L-homocysteine + H(+)</text>
        <dbReference type="Rhea" id="RHEA:15561"/>
        <dbReference type="ChEBI" id="CHEBI:15378"/>
        <dbReference type="ChEBI" id="CHEBI:18171"/>
        <dbReference type="ChEBI" id="CHEBI:18227"/>
        <dbReference type="ChEBI" id="CHEBI:57856"/>
        <dbReference type="ChEBI" id="CHEBI:59789"/>
        <dbReference type="EC" id="2.1.1.110"/>
    </reaction>
</comment>
<comment type="catalytic activity">
    <reaction>
        <text>dihydrosterigmatocystin + S-adenosyl-L-methionine = 8-O-methyldihydrosterigmatocystin + S-adenosyl-L-homocysteine + H(+)</text>
        <dbReference type="Rhea" id="RHEA:35767"/>
        <dbReference type="ChEBI" id="CHEBI:15378"/>
        <dbReference type="ChEBI" id="CHEBI:57856"/>
        <dbReference type="ChEBI" id="CHEBI:59789"/>
        <dbReference type="ChEBI" id="CHEBI:72677"/>
        <dbReference type="ChEBI" id="CHEBI:72678"/>
        <dbReference type="EC" id="2.1.1.110"/>
    </reaction>
</comment>
<comment type="pathway">
    <text>Mycotoxin biosynthesis; aflatoxin biosynthesis.</text>
</comment>
<comment type="similarity">
    <text evidence="4">Belongs to the class I-like SAM-binding methyltransferase superfamily. Cation-independent O-methyltransferase family. COMT subfamily.</text>
</comment>
<name>OMTA_ASPFN</name>
<keyword id="KW-0489">Methyltransferase</keyword>
<keyword id="KW-0949">S-adenosyl-L-methionine</keyword>
<keyword id="KW-0808">Transferase</keyword>
<sequence>MTLPNKAALVGLAHTLSEQVKRYLVTADETKSPEDHKLCIEGERTPSSTEHAQAWEIVRTCDRIGSLVHGPVPWLLSNALSHLDSACLAAATQLNLQDIIVDGPSPTSLDTIVTATGVSEDLLRRILRGCAQRFIFEEVAPDQYAHTDASKMLRVTGIHALVGFSCDEVMRSAAYFSNFLQQTKGKPPSWNVPSPFSLAFDPTKGLFDYYSTVDEVRGRRFDLGMGGTEATKPLVEEMFDFSSLPEGSTVVDVGGGRGHLSRRVSQKHPHLRFIVQDLPAVIHGVEDTDKVTMMEHDIRRRNPVRGADVYLLRSILHDYPDAACVEILSNIVTAMDPSKSRILLDEMIMPDLLAQDSQRFMNQIDMTVVLTLNGKERSTKEWNSLITMVDNRLETEKIWWRKGEEGSHWGVQQLRLRK</sequence>
<feature type="propeptide" id="PRO_0000021896" evidence="3">
    <location>
        <begin position="1"/>
        <end position="41"/>
    </location>
</feature>
<feature type="chain" id="PRO_0000021897" description="Sterigmatocystin 8-O-methyltransferase">
    <location>
        <begin position="42"/>
        <end position="418"/>
    </location>
</feature>
<feature type="region of interest" description="Substrate binding" evidence="1">
    <location>
        <begin position="206"/>
        <end position="225"/>
    </location>
</feature>
<feature type="active site" description="Proton acceptor" evidence="4">
    <location>
        <position position="317"/>
    </location>
</feature>
<feature type="binding site" evidence="1">
    <location>
        <begin position="170"/>
        <end position="176"/>
    </location>
    <ligand>
        <name>substrate</name>
    </ligand>
</feature>
<feature type="binding site" evidence="2">
    <location>
        <begin position="254"/>
        <end position="255"/>
    </location>
    <ligand>
        <name>S-adenosyl-L-methionine</name>
        <dbReference type="ChEBI" id="CHEBI:59789"/>
    </ligand>
</feature>
<feature type="binding site" evidence="2">
    <location>
        <position position="277"/>
    </location>
    <ligand>
        <name>S-adenosyl-L-methionine</name>
        <dbReference type="ChEBI" id="CHEBI:59789"/>
    </ligand>
</feature>
<feature type="binding site" evidence="2">
    <location>
        <begin position="297"/>
        <end position="298"/>
    </location>
    <ligand>
        <name>S-adenosyl-L-methionine</name>
        <dbReference type="ChEBI" id="CHEBI:59789"/>
    </ligand>
</feature>
<feature type="binding site" evidence="2">
    <location>
        <position position="313"/>
    </location>
    <ligand>
        <name>S-adenosyl-L-methionine</name>
        <dbReference type="ChEBI" id="CHEBI:59789"/>
    </ligand>
</feature>
<proteinExistence type="inferred from homology"/>
<accession>P55790</accession>
<accession>B8NHY5</accession>
<accession>Q00051</accession>
<evidence type="ECO:0000250" key="1"/>
<evidence type="ECO:0000250" key="2">
    <source>
        <dbReference type="UniProtKB" id="O04385"/>
    </source>
</evidence>
<evidence type="ECO:0000250" key="3">
    <source>
        <dbReference type="UniProtKB" id="Q12120"/>
    </source>
</evidence>
<evidence type="ECO:0000255" key="4">
    <source>
        <dbReference type="PROSITE-ProRule" id="PRU01020"/>
    </source>
</evidence>
<reference key="1">
    <citation type="journal article" date="1995" name="Gene">
        <title>Comparison of the omtA genes encoding O-methyltransferases involved in aflatoxin biosynthesis from Aspergillus parasiticus and A. flavus.</title>
        <authorList>
            <person name="Yu J."/>
            <person name="Chang P.-K."/>
            <person name="Payne G.A."/>
            <person name="Cary J.W."/>
            <person name="Bhatnagar D."/>
            <person name="Cleveland T.E."/>
        </authorList>
    </citation>
    <scope>NUCLEOTIDE SEQUENCE [GENOMIC DNA]</scope>
    <source>
        <strain>ATCC 200026 / FGSC A1120 / IAM 13836 / NRRL 3357 / JCM 12722 / SRRC 167</strain>
    </source>
</reference>
<reference key="2">
    <citation type="journal article" date="2015" name="Genome Announc.">
        <title>Genome sequence of Aspergillus flavus NRRL 3357, a strain that causes aflatoxin contamination of food and feed.</title>
        <authorList>
            <person name="Nierman W.C."/>
            <person name="Yu J."/>
            <person name="Fedorova-Abrams N.D."/>
            <person name="Losada L."/>
            <person name="Cleveland T.E."/>
            <person name="Bhatnagar D."/>
            <person name="Bennett J.W."/>
            <person name="Dean R."/>
            <person name="Payne G.A."/>
        </authorList>
    </citation>
    <scope>NUCLEOTIDE SEQUENCE [LARGE SCALE GENOMIC DNA]</scope>
    <source>
        <strain>ATCC 200026 / FGSC A1120 / IAM 13836 / NRRL 3357 / JCM 12722 / SRRC 167</strain>
    </source>
</reference>
<dbReference type="EC" id="2.1.1.110"/>
<dbReference type="EMBL" id="L25836">
    <property type="protein sequence ID" value="AAA32698.1"/>
    <property type="molecule type" value="Genomic_DNA"/>
</dbReference>
<dbReference type="EMBL" id="EQ963478">
    <property type="protein sequence ID" value="EED51156.1"/>
    <property type="molecule type" value="Genomic_DNA"/>
</dbReference>
<dbReference type="RefSeq" id="XP_002379932.1">
    <property type="nucleotide sequence ID" value="XM_002379891.1"/>
</dbReference>
<dbReference type="SMR" id="P55790"/>
<dbReference type="STRING" id="332952.P55790"/>
<dbReference type="EnsemblFungi" id="EED51156">
    <property type="protein sequence ID" value="EED51156"/>
    <property type="gene ID" value="AFLA_139210"/>
</dbReference>
<dbReference type="VEuPathDB" id="FungiDB:AFLA_006291"/>
<dbReference type="eggNOG" id="KOG3178">
    <property type="taxonomic scope" value="Eukaryota"/>
</dbReference>
<dbReference type="OMA" id="DYFYTED"/>
<dbReference type="UniPathway" id="UPA00287"/>
<dbReference type="GO" id="GO:0046983">
    <property type="term" value="F:protein dimerization activity"/>
    <property type="evidence" value="ECO:0007669"/>
    <property type="project" value="InterPro"/>
</dbReference>
<dbReference type="GO" id="GO:0047146">
    <property type="term" value="F:sterigmatocystin 7-O-methyltransferase activity"/>
    <property type="evidence" value="ECO:0007669"/>
    <property type="project" value="UniProtKB-EC"/>
</dbReference>
<dbReference type="GO" id="GO:0045122">
    <property type="term" value="P:aflatoxin biosynthetic process"/>
    <property type="evidence" value="ECO:0007669"/>
    <property type="project" value="UniProtKB-UniPathway"/>
</dbReference>
<dbReference type="GO" id="GO:0032259">
    <property type="term" value="P:methylation"/>
    <property type="evidence" value="ECO:0007669"/>
    <property type="project" value="UniProtKB-KW"/>
</dbReference>
<dbReference type="Gene3D" id="3.40.50.150">
    <property type="entry name" value="Vaccinia Virus protein VP39"/>
    <property type="match status" value="1"/>
</dbReference>
<dbReference type="Gene3D" id="1.10.10.10">
    <property type="entry name" value="Winged helix-like DNA-binding domain superfamily/Winged helix DNA-binding domain"/>
    <property type="match status" value="1"/>
</dbReference>
<dbReference type="InterPro" id="IPR016461">
    <property type="entry name" value="COMT-like"/>
</dbReference>
<dbReference type="InterPro" id="IPR001077">
    <property type="entry name" value="O_MeTrfase_dom"/>
</dbReference>
<dbReference type="InterPro" id="IPR012967">
    <property type="entry name" value="Plant_O-MeTrfase_dimerisation"/>
</dbReference>
<dbReference type="InterPro" id="IPR029063">
    <property type="entry name" value="SAM-dependent_MTases_sf"/>
</dbReference>
<dbReference type="InterPro" id="IPR036388">
    <property type="entry name" value="WH-like_DNA-bd_sf"/>
</dbReference>
<dbReference type="InterPro" id="IPR036390">
    <property type="entry name" value="WH_DNA-bd_sf"/>
</dbReference>
<dbReference type="PANTHER" id="PTHR43712:SF5">
    <property type="entry name" value="O-METHYLTRANSFERASE ASQN-RELATED"/>
    <property type="match status" value="1"/>
</dbReference>
<dbReference type="PANTHER" id="PTHR43712">
    <property type="entry name" value="PUTATIVE (AFU_ORTHOLOGUE AFUA_4G14580)-RELATED"/>
    <property type="match status" value="1"/>
</dbReference>
<dbReference type="Pfam" id="PF08100">
    <property type="entry name" value="Dimerisation"/>
    <property type="match status" value="1"/>
</dbReference>
<dbReference type="Pfam" id="PF00891">
    <property type="entry name" value="Methyltransf_2"/>
    <property type="match status" value="1"/>
</dbReference>
<dbReference type="SUPFAM" id="SSF53335">
    <property type="entry name" value="S-adenosyl-L-methionine-dependent methyltransferases"/>
    <property type="match status" value="1"/>
</dbReference>
<dbReference type="SUPFAM" id="SSF46785">
    <property type="entry name" value="Winged helix' DNA-binding domain"/>
    <property type="match status" value="1"/>
</dbReference>
<dbReference type="PROSITE" id="PS51683">
    <property type="entry name" value="SAM_OMT_II"/>
    <property type="match status" value="1"/>
</dbReference>
<organism>
    <name type="scientific">Aspergillus flavus (strain ATCC 200026 / FGSC A1120 / IAM 13836 / NRRL 3357 / JCM 12722 / SRRC 167)</name>
    <dbReference type="NCBI Taxonomy" id="332952"/>
    <lineage>
        <taxon>Eukaryota</taxon>
        <taxon>Fungi</taxon>
        <taxon>Dikarya</taxon>
        <taxon>Ascomycota</taxon>
        <taxon>Pezizomycotina</taxon>
        <taxon>Eurotiomycetes</taxon>
        <taxon>Eurotiomycetidae</taxon>
        <taxon>Eurotiales</taxon>
        <taxon>Aspergillaceae</taxon>
        <taxon>Aspergillus</taxon>
        <taxon>Aspergillus subgen. Circumdati</taxon>
    </lineage>
</organism>
<protein>
    <recommendedName>
        <fullName>Sterigmatocystin 8-O-methyltransferase</fullName>
        <ecNumber>2.1.1.110</ecNumber>
    </recommendedName>
</protein>